<keyword id="KW-0238">DNA-binding</keyword>
<keyword id="KW-1185">Reference proteome</keyword>
<keyword id="KW-0678">Repressor</keyword>
<keyword id="KW-0804">Transcription</keyword>
<keyword id="KW-0805">Transcription regulation</keyword>
<dbReference type="EMBL" id="D26168">
    <property type="protein sequence ID" value="BAA05157.1"/>
    <property type="molecule type" value="Genomic_DNA"/>
</dbReference>
<dbReference type="EMBL" id="AE006468">
    <property type="protein sequence ID" value="AAL21656.1"/>
    <property type="molecule type" value="Genomic_DNA"/>
</dbReference>
<dbReference type="RefSeq" id="NP_461697.1">
    <property type="nucleotide sequence ID" value="NC_003197.2"/>
</dbReference>
<dbReference type="RefSeq" id="WP_000388997.1">
    <property type="nucleotide sequence ID" value="NC_003197.2"/>
</dbReference>
<dbReference type="SMR" id="P52619"/>
<dbReference type="STRING" id="99287.STM2770"/>
<dbReference type="PaxDb" id="99287-STM2770"/>
<dbReference type="GeneID" id="1254293"/>
<dbReference type="KEGG" id="stm:STM2770"/>
<dbReference type="PATRIC" id="fig|99287.12.peg.2922"/>
<dbReference type="HOGENOM" id="CLU_142266_0_0_6"/>
<dbReference type="OMA" id="CQVGVRK"/>
<dbReference type="BioCyc" id="SENT99287:STM2770-MONOMER"/>
<dbReference type="Proteomes" id="UP000001014">
    <property type="component" value="Chromosome"/>
</dbReference>
<dbReference type="GO" id="GO:0003677">
    <property type="term" value="F:DNA binding"/>
    <property type="evidence" value="ECO:0007669"/>
    <property type="project" value="UniProtKB-KW"/>
</dbReference>
<dbReference type="GO" id="GO:0003700">
    <property type="term" value="F:DNA-binding transcription factor activity"/>
    <property type="evidence" value="ECO:0007669"/>
    <property type="project" value="InterPro"/>
</dbReference>
<dbReference type="InterPro" id="IPR003223">
    <property type="entry name" value="Flag1_repressor"/>
</dbReference>
<dbReference type="Pfam" id="PF03614">
    <property type="entry name" value="Flag1_repress"/>
    <property type="match status" value="1"/>
</dbReference>
<organism>
    <name type="scientific">Salmonella typhimurium (strain LT2 / SGSC1412 / ATCC 700720)</name>
    <dbReference type="NCBI Taxonomy" id="99287"/>
    <lineage>
        <taxon>Bacteria</taxon>
        <taxon>Pseudomonadati</taxon>
        <taxon>Pseudomonadota</taxon>
        <taxon>Gammaproteobacteria</taxon>
        <taxon>Enterobacterales</taxon>
        <taxon>Enterobacteriaceae</taxon>
        <taxon>Salmonella</taxon>
    </lineage>
</organism>
<proteinExistence type="predicted"/>
<name>FLJA_SALTY</name>
<accession>P52619</accession>
<comment type="function">
    <text>Transcriptional repressor of the FliC phase-1 flagellin.</text>
</comment>
<feature type="chain" id="PRO_0000087294" description="Repressor of phase 1 flagellin gene">
    <location>
        <begin position="1"/>
        <end position="179"/>
    </location>
</feature>
<sequence length="179" mass="20322">MECMAVNDISYGREAEIWPRDYSMLARRVQFLRFNDIPVRLVSNNARIITGYIAKFNPKENLILASDKPKGNKRIEVKLESLAILEELSGNDAFNLSLVPADGFNLQQYTPSRRDYFSICNKCYKQGVGIKIYMKYGQVLTGKTTGVNACQVGVRTSNGNHMQVMFDWVSRITSSDYAE</sequence>
<gene>
    <name type="primary">fljA</name>
    <name type="ordered locus">STM2770</name>
</gene>
<protein>
    <recommendedName>
        <fullName>Repressor of phase 1 flagellin gene</fullName>
    </recommendedName>
</protein>
<reference key="1">
    <citation type="submission" date="1994-01" db="EMBL/GenBank/DDBJ databases">
        <authorList>
            <person name="Mingorance J."/>
            <person name="Tanaka S."/>
            <person name="Tominaga A."/>
            <person name="Enomoto M."/>
        </authorList>
    </citation>
    <scope>NUCLEOTIDE SEQUENCE [GENOMIC DNA]</scope>
    <source>
        <strain>SJ2353</strain>
    </source>
</reference>
<reference key="2">
    <citation type="journal article" date="2001" name="Nature">
        <title>Complete genome sequence of Salmonella enterica serovar Typhimurium LT2.</title>
        <authorList>
            <person name="McClelland M."/>
            <person name="Sanderson K.E."/>
            <person name="Spieth J."/>
            <person name="Clifton S.W."/>
            <person name="Latreille P."/>
            <person name="Courtney L."/>
            <person name="Porwollik S."/>
            <person name="Ali J."/>
            <person name="Dante M."/>
            <person name="Du F."/>
            <person name="Hou S."/>
            <person name="Layman D."/>
            <person name="Leonard S."/>
            <person name="Nguyen C."/>
            <person name="Scott K."/>
            <person name="Holmes A."/>
            <person name="Grewal N."/>
            <person name="Mulvaney E."/>
            <person name="Ryan E."/>
            <person name="Sun H."/>
            <person name="Florea L."/>
            <person name="Miller W."/>
            <person name="Stoneking T."/>
            <person name="Nhan M."/>
            <person name="Waterston R."/>
            <person name="Wilson R.K."/>
        </authorList>
    </citation>
    <scope>NUCLEOTIDE SEQUENCE [LARGE SCALE GENOMIC DNA]</scope>
    <source>
        <strain>LT2 / SGSC1412 / ATCC 700720</strain>
    </source>
</reference>